<protein>
    <recommendedName>
        <fullName evidence="1">Biotin synthase</fullName>
        <ecNumber evidence="1">2.8.1.6</ecNumber>
    </recommendedName>
</protein>
<evidence type="ECO:0000255" key="1">
    <source>
        <dbReference type="HAMAP-Rule" id="MF_01694"/>
    </source>
</evidence>
<evidence type="ECO:0000255" key="2">
    <source>
        <dbReference type="PROSITE-ProRule" id="PRU01266"/>
    </source>
</evidence>
<gene>
    <name evidence="1" type="primary">bioB</name>
    <name type="ordered locus">Asuc_1132</name>
</gene>
<sequence>METTLQLYSNTPHPQAQYWSVCKVEALFETPFLELVHRAAIVHREHFNPQAVQLSTLMSIKTGGCPEDCGYCPQSARYRTGVQKQALLEVEDIVEKAKIAKSRGASRFCMGAAWRGPKPKDIGKITEIVKAVKDLGLETCGTFGLLEDGMAENLKEAGLDYYNHNIDTSPEHYKKVIGTRGFEDRLSTLGKVRKAGLKVCCGGIIGMNENRKERAGFIASLANLDPQPESVPINQLVKVDGTPLADAEELDWTEFVRTIAVARITMPKSYVRLSAGRQGMSEEMQAMCFMAGANSIFYGDKLLVTGNAEEDRDQLLMAKLDLEPETAENRRVSVQPER</sequence>
<proteinExistence type="inferred from homology"/>
<accession>A6VNF1</accession>
<keyword id="KW-0001">2Fe-2S</keyword>
<keyword id="KW-0004">4Fe-4S</keyword>
<keyword id="KW-0093">Biotin biosynthesis</keyword>
<keyword id="KW-0408">Iron</keyword>
<keyword id="KW-0411">Iron-sulfur</keyword>
<keyword id="KW-0479">Metal-binding</keyword>
<keyword id="KW-1185">Reference proteome</keyword>
<keyword id="KW-0949">S-adenosyl-L-methionine</keyword>
<keyword id="KW-0808">Transferase</keyword>
<reference key="1">
    <citation type="journal article" date="2010" name="BMC Genomics">
        <title>A genomic perspective on the potential of Actinobacillus succinogenes for industrial succinate production.</title>
        <authorList>
            <person name="McKinlay J.B."/>
            <person name="Laivenieks M."/>
            <person name="Schindler B.D."/>
            <person name="McKinlay A.A."/>
            <person name="Siddaramappa S."/>
            <person name="Challacombe J.F."/>
            <person name="Lowry S.R."/>
            <person name="Clum A."/>
            <person name="Lapidus A.L."/>
            <person name="Burkhart K.B."/>
            <person name="Harkins V."/>
            <person name="Vieille C."/>
        </authorList>
    </citation>
    <scope>NUCLEOTIDE SEQUENCE [LARGE SCALE GENOMIC DNA]</scope>
    <source>
        <strain>ATCC 55618 / DSM 22257 / CCUG 43843 / 130Z</strain>
    </source>
</reference>
<name>BIOB_ACTSZ</name>
<organism>
    <name type="scientific">Actinobacillus succinogenes (strain ATCC 55618 / DSM 22257 / CCUG 43843 / 130Z)</name>
    <dbReference type="NCBI Taxonomy" id="339671"/>
    <lineage>
        <taxon>Bacteria</taxon>
        <taxon>Pseudomonadati</taxon>
        <taxon>Pseudomonadota</taxon>
        <taxon>Gammaproteobacteria</taxon>
        <taxon>Pasteurellales</taxon>
        <taxon>Pasteurellaceae</taxon>
        <taxon>Actinobacillus</taxon>
    </lineage>
</organism>
<feature type="chain" id="PRO_0000381183" description="Biotin synthase">
    <location>
        <begin position="1"/>
        <end position="338"/>
    </location>
</feature>
<feature type="domain" description="Radical SAM core" evidence="2">
    <location>
        <begin position="50"/>
        <end position="277"/>
    </location>
</feature>
<feature type="binding site" evidence="1">
    <location>
        <position position="65"/>
    </location>
    <ligand>
        <name>[4Fe-4S] cluster</name>
        <dbReference type="ChEBI" id="CHEBI:49883"/>
        <note>4Fe-4S-S-AdoMet</note>
    </ligand>
</feature>
<feature type="binding site" evidence="1">
    <location>
        <position position="69"/>
    </location>
    <ligand>
        <name>[4Fe-4S] cluster</name>
        <dbReference type="ChEBI" id="CHEBI:49883"/>
        <note>4Fe-4S-S-AdoMet</note>
    </ligand>
</feature>
<feature type="binding site" evidence="1">
    <location>
        <position position="72"/>
    </location>
    <ligand>
        <name>[4Fe-4S] cluster</name>
        <dbReference type="ChEBI" id="CHEBI:49883"/>
        <note>4Fe-4S-S-AdoMet</note>
    </ligand>
</feature>
<feature type="binding site" evidence="1">
    <location>
        <position position="109"/>
    </location>
    <ligand>
        <name>[2Fe-2S] cluster</name>
        <dbReference type="ChEBI" id="CHEBI:190135"/>
    </ligand>
</feature>
<feature type="binding site" evidence="1">
    <location>
        <position position="140"/>
    </location>
    <ligand>
        <name>[2Fe-2S] cluster</name>
        <dbReference type="ChEBI" id="CHEBI:190135"/>
    </ligand>
</feature>
<feature type="binding site" evidence="1">
    <location>
        <position position="200"/>
    </location>
    <ligand>
        <name>[2Fe-2S] cluster</name>
        <dbReference type="ChEBI" id="CHEBI:190135"/>
    </ligand>
</feature>
<feature type="binding site" evidence="1">
    <location>
        <position position="272"/>
    </location>
    <ligand>
        <name>[2Fe-2S] cluster</name>
        <dbReference type="ChEBI" id="CHEBI:190135"/>
    </ligand>
</feature>
<dbReference type="EC" id="2.8.1.6" evidence="1"/>
<dbReference type="EMBL" id="CP000746">
    <property type="protein sequence ID" value="ABR74498.1"/>
    <property type="molecule type" value="Genomic_DNA"/>
</dbReference>
<dbReference type="RefSeq" id="WP_012072875.1">
    <property type="nucleotide sequence ID" value="NC_009655.1"/>
</dbReference>
<dbReference type="SMR" id="A6VNF1"/>
<dbReference type="STRING" id="339671.Asuc_1132"/>
<dbReference type="KEGG" id="asu:Asuc_1132"/>
<dbReference type="eggNOG" id="COG0502">
    <property type="taxonomic scope" value="Bacteria"/>
</dbReference>
<dbReference type="HOGENOM" id="CLU_033172_1_2_6"/>
<dbReference type="OrthoDB" id="9786826at2"/>
<dbReference type="UniPathway" id="UPA00078">
    <property type="reaction ID" value="UER00162"/>
</dbReference>
<dbReference type="Proteomes" id="UP000001114">
    <property type="component" value="Chromosome"/>
</dbReference>
<dbReference type="GO" id="GO:0051537">
    <property type="term" value="F:2 iron, 2 sulfur cluster binding"/>
    <property type="evidence" value="ECO:0007669"/>
    <property type="project" value="UniProtKB-KW"/>
</dbReference>
<dbReference type="GO" id="GO:0051539">
    <property type="term" value="F:4 iron, 4 sulfur cluster binding"/>
    <property type="evidence" value="ECO:0007669"/>
    <property type="project" value="UniProtKB-KW"/>
</dbReference>
<dbReference type="GO" id="GO:0004076">
    <property type="term" value="F:biotin synthase activity"/>
    <property type="evidence" value="ECO:0007669"/>
    <property type="project" value="UniProtKB-UniRule"/>
</dbReference>
<dbReference type="GO" id="GO:0005506">
    <property type="term" value="F:iron ion binding"/>
    <property type="evidence" value="ECO:0007669"/>
    <property type="project" value="UniProtKB-UniRule"/>
</dbReference>
<dbReference type="GO" id="GO:0009102">
    <property type="term" value="P:biotin biosynthetic process"/>
    <property type="evidence" value="ECO:0007669"/>
    <property type="project" value="UniProtKB-UniRule"/>
</dbReference>
<dbReference type="CDD" id="cd01335">
    <property type="entry name" value="Radical_SAM"/>
    <property type="match status" value="1"/>
</dbReference>
<dbReference type="FunFam" id="3.20.20.70:FF:000011">
    <property type="entry name" value="Biotin synthase"/>
    <property type="match status" value="1"/>
</dbReference>
<dbReference type="Gene3D" id="3.20.20.70">
    <property type="entry name" value="Aldolase class I"/>
    <property type="match status" value="1"/>
</dbReference>
<dbReference type="HAMAP" id="MF_01694">
    <property type="entry name" value="BioB"/>
    <property type="match status" value="1"/>
</dbReference>
<dbReference type="InterPro" id="IPR013785">
    <property type="entry name" value="Aldolase_TIM"/>
</dbReference>
<dbReference type="InterPro" id="IPR010722">
    <property type="entry name" value="BATS_dom"/>
</dbReference>
<dbReference type="InterPro" id="IPR002684">
    <property type="entry name" value="Biotin_synth/BioAB"/>
</dbReference>
<dbReference type="InterPro" id="IPR024177">
    <property type="entry name" value="Biotin_synthase"/>
</dbReference>
<dbReference type="InterPro" id="IPR006638">
    <property type="entry name" value="Elp3/MiaA/NifB-like_rSAM"/>
</dbReference>
<dbReference type="InterPro" id="IPR007197">
    <property type="entry name" value="rSAM"/>
</dbReference>
<dbReference type="NCBIfam" id="TIGR00433">
    <property type="entry name" value="bioB"/>
    <property type="match status" value="1"/>
</dbReference>
<dbReference type="PANTHER" id="PTHR22976">
    <property type="entry name" value="BIOTIN SYNTHASE"/>
    <property type="match status" value="1"/>
</dbReference>
<dbReference type="PANTHER" id="PTHR22976:SF2">
    <property type="entry name" value="BIOTIN SYNTHASE, MITOCHONDRIAL"/>
    <property type="match status" value="1"/>
</dbReference>
<dbReference type="Pfam" id="PF06968">
    <property type="entry name" value="BATS"/>
    <property type="match status" value="1"/>
</dbReference>
<dbReference type="Pfam" id="PF04055">
    <property type="entry name" value="Radical_SAM"/>
    <property type="match status" value="1"/>
</dbReference>
<dbReference type="PIRSF" id="PIRSF001619">
    <property type="entry name" value="Biotin_synth"/>
    <property type="match status" value="1"/>
</dbReference>
<dbReference type="SFLD" id="SFLDF00272">
    <property type="entry name" value="biotin_synthase"/>
    <property type="match status" value="1"/>
</dbReference>
<dbReference type="SFLD" id="SFLDS00029">
    <property type="entry name" value="Radical_SAM"/>
    <property type="match status" value="1"/>
</dbReference>
<dbReference type="SMART" id="SM00876">
    <property type="entry name" value="BATS"/>
    <property type="match status" value="1"/>
</dbReference>
<dbReference type="SMART" id="SM00729">
    <property type="entry name" value="Elp3"/>
    <property type="match status" value="1"/>
</dbReference>
<dbReference type="SUPFAM" id="SSF102114">
    <property type="entry name" value="Radical SAM enzymes"/>
    <property type="match status" value="1"/>
</dbReference>
<dbReference type="PROSITE" id="PS51918">
    <property type="entry name" value="RADICAL_SAM"/>
    <property type="match status" value="1"/>
</dbReference>
<comment type="function">
    <text evidence="1">Catalyzes the conversion of dethiobiotin (DTB) to biotin by the insertion of a sulfur atom into dethiobiotin via a radical-based mechanism.</text>
</comment>
<comment type="catalytic activity">
    <reaction evidence="1">
        <text>(4R,5S)-dethiobiotin + (sulfur carrier)-SH + 2 reduced [2Fe-2S]-[ferredoxin] + 2 S-adenosyl-L-methionine = (sulfur carrier)-H + biotin + 2 5'-deoxyadenosine + 2 L-methionine + 2 oxidized [2Fe-2S]-[ferredoxin]</text>
        <dbReference type="Rhea" id="RHEA:22060"/>
        <dbReference type="Rhea" id="RHEA-COMP:10000"/>
        <dbReference type="Rhea" id="RHEA-COMP:10001"/>
        <dbReference type="Rhea" id="RHEA-COMP:14737"/>
        <dbReference type="Rhea" id="RHEA-COMP:14739"/>
        <dbReference type="ChEBI" id="CHEBI:17319"/>
        <dbReference type="ChEBI" id="CHEBI:29917"/>
        <dbReference type="ChEBI" id="CHEBI:33737"/>
        <dbReference type="ChEBI" id="CHEBI:33738"/>
        <dbReference type="ChEBI" id="CHEBI:57586"/>
        <dbReference type="ChEBI" id="CHEBI:57844"/>
        <dbReference type="ChEBI" id="CHEBI:59789"/>
        <dbReference type="ChEBI" id="CHEBI:64428"/>
        <dbReference type="ChEBI" id="CHEBI:149473"/>
        <dbReference type="EC" id="2.8.1.6"/>
    </reaction>
</comment>
<comment type="cofactor">
    <cofactor evidence="1">
        <name>[4Fe-4S] cluster</name>
        <dbReference type="ChEBI" id="CHEBI:49883"/>
    </cofactor>
    <text evidence="1">Binds 1 [4Fe-4S] cluster. The cluster is coordinated with 3 cysteines and an exchangeable S-adenosyl-L-methionine.</text>
</comment>
<comment type="cofactor">
    <cofactor evidence="1">
        <name>[2Fe-2S] cluster</name>
        <dbReference type="ChEBI" id="CHEBI:190135"/>
    </cofactor>
    <text evidence="1">Binds 1 [2Fe-2S] cluster. The cluster is coordinated with 3 cysteines and 1 arginine.</text>
</comment>
<comment type="pathway">
    <text evidence="1">Cofactor biosynthesis; biotin biosynthesis; biotin from 7,8-diaminononanoate: step 2/2.</text>
</comment>
<comment type="subunit">
    <text evidence="1">Homodimer.</text>
</comment>
<comment type="similarity">
    <text evidence="1">Belongs to the radical SAM superfamily. Biotin synthase family.</text>
</comment>